<reference key="1">
    <citation type="journal article" date="2002" name="Genes Dev.">
        <title>The GEX-2 and GEX-3 proteins are required for tissue morphogenesis and cell migrations in C. elegans.</title>
        <authorList>
            <person name="Soto M.C."/>
            <person name="Qadota H."/>
            <person name="Kasuya K."/>
            <person name="Inoue M."/>
            <person name="Tsuboi D."/>
            <person name="Mello C.C."/>
            <person name="Kaibuchi K."/>
        </authorList>
    </citation>
    <scope>NUCLEOTIDE SEQUENCE [MRNA]</scope>
    <scope>FUNCTION</scope>
    <scope>INTERACTION WITH GEX-2</scope>
    <scope>SUBCELLULAR LOCATION</scope>
    <scope>DISRUPTION PHENOTYPE</scope>
</reference>
<reference key="2">
    <citation type="journal article" date="1998" name="Science">
        <title>Genome sequence of the nematode C. elegans: a platform for investigating biology.</title>
        <authorList>
            <consortium name="The C. elegans sequencing consortium"/>
        </authorList>
    </citation>
    <scope>NUCLEOTIDE SEQUENCE [LARGE SCALE GENOMIC DNA]</scope>
    <source>
        <strain>Bristol N2</strain>
    </source>
</reference>
<reference key="3">
    <citation type="journal article" date="2002" name="Biochem. Biophys. Res. Commun.">
        <title>Isolation of the interacting molecules with GEX-3 by a novel functional screening.</title>
        <authorList>
            <person name="Tsuboi D."/>
            <person name="Qadota H."/>
            <person name="Kasuya K."/>
            <person name="Amano M."/>
            <person name="Kaibuchi K."/>
        </authorList>
    </citation>
    <scope>INTERACTION WITH ACO-1</scope>
</reference>
<reference key="4">
    <citation type="journal article" date="2009" name="PLoS Genet.">
        <title>Requirements for F-BAR proteins TOCA-1 and TOCA-2 in actin dynamics and membrane trafficking during Caenorhabditis elegans oocyte growth and embryonic epidermal morphogenesis.</title>
        <authorList>
            <person name="Giuliani C."/>
            <person name="Troglio F."/>
            <person name="Bai Z."/>
            <person name="Patel F.B."/>
            <person name="Zucconi A."/>
            <person name="Malabarba M.G."/>
            <person name="Disanza A."/>
            <person name="Stradal T.B."/>
            <person name="Cassata G."/>
            <person name="Confalonieri S."/>
            <person name="Hardin J.D."/>
            <person name="Soto M.C."/>
            <person name="Grant B.D."/>
            <person name="Scita G."/>
        </authorList>
    </citation>
    <scope>FUNCTION</scope>
    <scope>DISRUPTION PHENOTYPE</scope>
</reference>
<reference key="5">
    <citation type="journal article" date="2020" name="Dev. Cell">
        <title>NLR-1/CASPR Anchors F-Actin to Promote Gap Junction Formation.</title>
        <authorList>
            <person name="Meng L."/>
            <person name="Yan D."/>
        </authorList>
    </citation>
    <scope>FUNCTION</scope>
    <scope>TISSUE SPECIFICITY</scope>
    <scope>DISRUPTION PHENOTYPE</scope>
</reference>
<reference key="6">
    <citation type="journal article" date="2021" name="Mol. Brain">
        <title>The C. elegans homolog of human panic-disorder risk gene TMEM132D orchestrates neuronal morphogenesis through the WAVE-regulatory complex.</title>
        <authorList>
            <person name="Wang X."/>
            <person name="Jiang W."/>
            <person name="Luo S."/>
            <person name="Yang X."/>
            <person name="Wang C."/>
            <person name="Wang B."/>
            <person name="Dang Y."/>
            <person name="Shen Y."/>
            <person name="Ma D.K."/>
        </authorList>
    </citation>
    <scope>INTERACTION WITH TMEM-132</scope>
</reference>
<feature type="chain" id="PRO_0000216177" description="Membrane-associated protein gex-3">
    <location>
        <begin position="1"/>
        <end position="1141"/>
    </location>
</feature>
<accession>P55163</accession>
<accession>Q19880</accession>
<protein>
    <recommendedName>
        <fullName>Membrane-associated protein gex-3</fullName>
    </recommendedName>
    <alternativeName>
        <fullName>Gut on exterior protein 3</fullName>
    </alternativeName>
</protein>
<comment type="function">
    <text evidence="1 3 4">Rac effector required for tissue morphogenesis, cell migrations and egg laying (PubMed:11877381). May play a role in egg laying and in yolk protein clatherin-mediated endocytosis by oocytes during oogenesis (PubMed:19798448). Plays a role in the formation of gap junctions between EA and EP endodermal precursor cells in embryos (PubMed:33238150).</text>
</comment>
<comment type="subunit">
    <text evidence="1 2 5">Interacts with aco-1, gei-13 and gex-2. Interacts with gex-3 (PubMed:33726789).</text>
</comment>
<comment type="interaction">
    <interactant intactId="EBI-1570181">
        <id>P55163</id>
    </interactant>
    <interactant intactId="EBI-1570205">
        <id>O44518</id>
        <label>gex-2</label>
    </interactant>
    <organismsDiffer>false</organismsDiffer>
    <experiments>4</experiments>
</comment>
<comment type="subcellular location">
    <subcellularLocation>
        <location evidence="1">Cytoplasm</location>
    </subcellularLocation>
    <text>Enriched at cell boundaries.</text>
</comment>
<comment type="tissue specificity">
    <text evidence="4">Expressed in neurons.</text>
</comment>
<comment type="disruption phenotype">
    <text evidence="1 3 4">Embryonic lethality with cells differentiating, but failing to become organized (PubMed:11877381). External hypodermal cells fail to spread over and enclose the embryo, but instead cluster on the dorsal side (PubMed:11877381). RNAi-mediated knockdown results in reduced egg laying and in defective endocytosis by oocytes characterized by an accumulation of aggregated yolk protein in the pseudocoelomatic space (PubMed:19798448). RNAi-mediated knockdown results in abherrent inx-3-positive gap junction formation along the adjoining membranes of EA and EP endodermal precursor cells at the 16-24 cell stage of embryogenesis (PubMed:33238150).</text>
</comment>
<comment type="similarity">
    <text evidence="6">Belongs to the HEM-1/HEM-2 family.</text>
</comment>
<keyword id="KW-0963">Cytoplasm</keyword>
<keyword id="KW-0217">Developmental protein</keyword>
<keyword id="KW-1185">Reference proteome</keyword>
<evidence type="ECO:0000269" key="1">
    <source>
    </source>
</evidence>
<evidence type="ECO:0000269" key="2">
    <source>
    </source>
</evidence>
<evidence type="ECO:0000269" key="3">
    <source>
    </source>
</evidence>
<evidence type="ECO:0000269" key="4">
    <source>
    </source>
</evidence>
<evidence type="ECO:0000269" key="5">
    <source>
    </source>
</evidence>
<evidence type="ECO:0000305" key="6"/>
<evidence type="ECO:0000312" key="7">
    <source>
        <dbReference type="WormBase" id="F28D1.10"/>
    </source>
</evidence>
<name>GEX3_CAEEL</name>
<organism>
    <name type="scientific">Caenorhabditis elegans</name>
    <dbReference type="NCBI Taxonomy" id="6239"/>
    <lineage>
        <taxon>Eukaryota</taxon>
        <taxon>Metazoa</taxon>
        <taxon>Ecdysozoa</taxon>
        <taxon>Nematoda</taxon>
        <taxon>Chromadorea</taxon>
        <taxon>Rhabditida</taxon>
        <taxon>Rhabditina</taxon>
        <taxon>Rhabditomorpha</taxon>
        <taxon>Rhabditoidea</taxon>
        <taxon>Rhabditidae</taxon>
        <taxon>Peloderinae</taxon>
        <taxon>Caenorhabditis</taxon>
    </lineage>
</organism>
<sequence>MAYKDARQVKIAEKLVILNDRAAGMMTRIYNIKKSSGDSKVKPQFLSDKKMEGAIKHIVRKFPVVDCRSNSSTFEYVQEKSTEITKSLSLYYYTFADILDLKDHIMQVLTTMESCQCQLDVTLNYDLTTSYLNLVVHLVTMMILLSRIEDRKAVLGLFNAAYDLQHGQSEASFPRLGQMILDYENPLKKLHEDLGPLNRLIYSALSSVTHTYQRRNKTADSWRTSNVFSLTAAPAQILYAAQTETIACEYLSLDVIDRWIVFCGTVCHSTLLNDDNIRHMWQLALQMNLCLRVFRDETFIVHQEIQAFLESSKEKSKRLQDVKDAFNHASVTAVAVHADRRRFLRSSLRELSLLLRDQPGLLGPKILYVWMALGAGRDEVIWLLRHQVEVPAISKKGSRMVEELVDRQLPELLFYMLELRDLVTKYYAVIQRYYLQYVSSYDSIVVSEEINQANGLTQEEAVLLTDFANEIGNINSDTDLRALRLDWFRFQAWTSAARSHFQLSRHKKLAIYMNTSVFHLKMIDLQDEMLRETSDLSLYCFYPKLAEKHWLNCLQLPAQARYVLSFARLAAHFTSALHDMCPEEKAFITEKALAQCNSVIEETCKQLSYILEKVAEHEFGLAYQMTPSAVAVRVVAQVVQQKGSGKAAAAAAAAARDYFIAGEESYRVDRQALTMPDKLQTTLLEISAALGAHRQIYVADHTFAPRTYLAQSLETKFVELLHGMFWEGQPHASNPKRPSEMLLALQAYMTVLQNLDTAISVDISNTMQTTLLQQTQLVDSKNKDTIAALYTKWYLEVLLRRASSGHMVWSEHLRTMLSSGQEQLSFMPDHYSDPQELRALVQIIGPYGVKLMTERLIWHVASQIMEMSKIVATYKDALQIARSNFDNAEKMKDVLNLLSVEPKDKKTPNATCAADAILQRTIIIGQICLFRDALHDALRHIVESKLPFLQASFDMLYHNLDDVDKVKIGEMSAAMGVTGPVDMSLVNAVRAQNPNIHPQEHYVNSCLLMVAVAICIPRIGMSDLSSYKPSIQASLNNSHCVPMAINTIGSALFHLHEQNDIQSRMKEFLALASSGILRTIHERDNSRQISDDVLRSHTTLYIILEQMVRKNRWLSMDVLETCFPYNLVRTAYQQCYEADAQ</sequence>
<gene>
    <name evidence="7" type="primary">gex-3</name>
    <name evidence="7" type="ORF">F28D1.10</name>
</gene>
<dbReference type="EMBL" id="AB073210">
    <property type="protein sequence ID" value="BAB70473.1"/>
    <property type="molecule type" value="mRNA"/>
</dbReference>
<dbReference type="EMBL" id="BX284604">
    <property type="protein sequence ID" value="CAA94604.1"/>
    <property type="molecule type" value="Genomic_DNA"/>
</dbReference>
<dbReference type="EMBL" id="Z70682">
    <property type="protein sequence ID" value="CAA94604.1"/>
    <property type="status" value="JOINED"/>
    <property type="molecule type" value="Genomic_DNA"/>
</dbReference>
<dbReference type="PIR" id="T20611">
    <property type="entry name" value="T20611"/>
</dbReference>
<dbReference type="RefSeq" id="NP_502368.1">
    <property type="nucleotide sequence ID" value="NM_069967.7"/>
</dbReference>
<dbReference type="SMR" id="P55163"/>
<dbReference type="BioGRID" id="43284">
    <property type="interactions" value="39"/>
</dbReference>
<dbReference type="FunCoup" id="P55163">
    <property type="interactions" value="2704"/>
</dbReference>
<dbReference type="IntAct" id="P55163">
    <property type="interactions" value="1"/>
</dbReference>
<dbReference type="STRING" id="6239.F28D1.10.2"/>
<dbReference type="PaxDb" id="6239-F28D1.10"/>
<dbReference type="PeptideAtlas" id="P55163"/>
<dbReference type="EnsemblMetazoa" id="F28D1.10.1">
    <property type="protein sequence ID" value="F28D1.10.1"/>
    <property type="gene ID" value="WBGene00001580"/>
</dbReference>
<dbReference type="GeneID" id="178191"/>
<dbReference type="KEGG" id="cel:CELE_F28D1.10"/>
<dbReference type="UCSC" id="F28D1.10">
    <property type="organism name" value="c. elegans"/>
</dbReference>
<dbReference type="AGR" id="WB:WBGene00001580"/>
<dbReference type="CTD" id="178191"/>
<dbReference type="WormBase" id="F28D1.10">
    <property type="protein sequence ID" value="CE05750"/>
    <property type="gene ID" value="WBGene00001580"/>
    <property type="gene designation" value="gex-3"/>
</dbReference>
<dbReference type="eggNOG" id="KOG1917">
    <property type="taxonomic scope" value="Eukaryota"/>
</dbReference>
<dbReference type="GeneTree" id="ENSGT00390000016619"/>
<dbReference type="HOGENOM" id="CLU_004450_0_0_1"/>
<dbReference type="InParanoid" id="P55163"/>
<dbReference type="OMA" id="LIWHVAS"/>
<dbReference type="OrthoDB" id="548214at2759"/>
<dbReference type="PhylomeDB" id="P55163"/>
<dbReference type="Reactome" id="R-CEL-2029482">
    <property type="pathway name" value="Regulation of actin dynamics for phagocytic cup formation"/>
</dbReference>
<dbReference type="Reactome" id="R-CEL-5663213">
    <property type="pathway name" value="RHO GTPases Activate WASPs and WAVEs"/>
</dbReference>
<dbReference type="Reactome" id="R-CEL-6798695">
    <property type="pathway name" value="Neutrophil degranulation"/>
</dbReference>
<dbReference type="Reactome" id="R-CEL-9013149">
    <property type="pathway name" value="RAC1 GTPase cycle"/>
</dbReference>
<dbReference type="Reactome" id="R-CEL-9013404">
    <property type="pathway name" value="RAC2 GTPase cycle"/>
</dbReference>
<dbReference type="Reactome" id="R-CEL-9013423">
    <property type="pathway name" value="RAC3 GTPase cycle"/>
</dbReference>
<dbReference type="PRO" id="PR:P55163"/>
<dbReference type="Proteomes" id="UP000001940">
    <property type="component" value="Chromosome IV"/>
</dbReference>
<dbReference type="Bgee" id="WBGene00001580">
    <property type="expression patterns" value="Expressed in germ line (C elegans) and 4 other cell types or tissues"/>
</dbReference>
<dbReference type="GO" id="GO:0030054">
    <property type="term" value="C:cell junction"/>
    <property type="evidence" value="ECO:0000314"/>
    <property type="project" value="WormBase"/>
</dbReference>
<dbReference type="GO" id="GO:0031209">
    <property type="term" value="C:SCAR complex"/>
    <property type="evidence" value="ECO:0000314"/>
    <property type="project" value="WormBase"/>
</dbReference>
<dbReference type="GO" id="GO:0007015">
    <property type="term" value="P:actin filament organization"/>
    <property type="evidence" value="ECO:0000315"/>
    <property type="project" value="UniProtKB"/>
</dbReference>
<dbReference type="GO" id="GO:0016477">
    <property type="term" value="P:cell migration"/>
    <property type="evidence" value="ECO:0000315"/>
    <property type="project" value="UniProtKB"/>
</dbReference>
<dbReference type="GO" id="GO:0000902">
    <property type="term" value="P:cell morphogenesis"/>
    <property type="evidence" value="ECO:0000318"/>
    <property type="project" value="GO_Central"/>
</dbReference>
<dbReference type="GO" id="GO:0030031">
    <property type="term" value="P:cell projection assembly"/>
    <property type="evidence" value="ECO:0000318"/>
    <property type="project" value="GO_Central"/>
</dbReference>
<dbReference type="GO" id="GO:0048668">
    <property type="term" value="P:collateral sprouting"/>
    <property type="evidence" value="ECO:0000315"/>
    <property type="project" value="UniProtKB"/>
</dbReference>
<dbReference type="GO" id="GO:0030866">
    <property type="term" value="P:cortical actin cytoskeleton organization"/>
    <property type="evidence" value="ECO:0000318"/>
    <property type="project" value="GO_Central"/>
</dbReference>
<dbReference type="GO" id="GO:0018991">
    <property type="term" value="P:egg-laying behavior"/>
    <property type="evidence" value="ECO:0000315"/>
    <property type="project" value="UniProtKB"/>
</dbReference>
<dbReference type="GO" id="GO:0010172">
    <property type="term" value="P:embryonic body morphogenesis"/>
    <property type="evidence" value="ECO:0000315"/>
    <property type="project" value="UniProtKB"/>
</dbReference>
<dbReference type="GO" id="GO:0048613">
    <property type="term" value="P:embryonic ectodermal digestive tract morphogenesis"/>
    <property type="evidence" value="ECO:0000315"/>
    <property type="project" value="UniProtKB"/>
</dbReference>
<dbReference type="GO" id="GO:0048812">
    <property type="term" value="P:neuron projection morphogenesis"/>
    <property type="evidence" value="ECO:0000318"/>
    <property type="project" value="GO_Central"/>
</dbReference>
<dbReference type="GO" id="GO:2000370">
    <property type="term" value="P:positive regulation of clathrin-dependent endocytosis"/>
    <property type="evidence" value="ECO:0000315"/>
    <property type="project" value="UniProtKB"/>
</dbReference>
<dbReference type="GO" id="GO:1901046">
    <property type="term" value="P:positive regulation of egg-laying behavior"/>
    <property type="evidence" value="ECO:0000315"/>
    <property type="project" value="UniProtKB"/>
</dbReference>
<dbReference type="GO" id="GO:1903598">
    <property type="term" value="P:positive regulation of gap junction assembly"/>
    <property type="evidence" value="ECO:0000315"/>
    <property type="project" value="UniProtKB"/>
</dbReference>
<dbReference type="GO" id="GO:1902474">
    <property type="term" value="P:positive regulation of protein localization to synapse"/>
    <property type="evidence" value="ECO:0000315"/>
    <property type="project" value="UniProtKB"/>
</dbReference>
<dbReference type="InterPro" id="IPR019137">
    <property type="entry name" value="Nck-associated_protein-1"/>
</dbReference>
<dbReference type="PANTHER" id="PTHR12093:SF10">
    <property type="entry name" value="MEMBRANE-ASSOCIATED PROTEIN HEM"/>
    <property type="match status" value="1"/>
</dbReference>
<dbReference type="PANTHER" id="PTHR12093">
    <property type="entry name" value="NCK-ASSOCIATED PROTEIN 1"/>
    <property type="match status" value="1"/>
</dbReference>
<dbReference type="Pfam" id="PF09735">
    <property type="entry name" value="Nckap1"/>
    <property type="match status" value="1"/>
</dbReference>
<proteinExistence type="evidence at protein level"/>